<sequence length="852" mass="95217">MRDFVIVFGSSSAITNPHHHHRRCYATAPESNRKTKSNSSFTKLLPSLPQQHSPSPASVSATHSLSSHFSNVVRWIPDGSLEYYADFASKLAEDGRIEDVALIAETLAAESGANVARFASMVDYDLLSKGISSNLRQGKIESVVYTLKRIEKVGIAPLDLVDDSSVKLMRKQFRAMANSVQVEKAIDLMEILAGLGFKIKELVDPFDVVKSCVEISNPQLAIRYACLLPHTELLLCRIIHGFGKKGDMVSVMTAYEACKQILDTPNMYICRTMIDVCGLCGDYVKSRYIYEDLLKENIKPNIYVINSLMNVNSHDLGYTLKVYKNMQILDVTADMTSYNILLKTCCLAGRVDLAQDIYKEAKRMESSGLLKLDAFTYCTIIKVFADAKMWKWALKVKDDMKSVGVTPNTHTWSSLISACANAGLVEQANHLFEEMLASGCEPNSQCFNILLHACVEACQYDRAFRLFQSWKGSSVNESLYADDIVSKGRTSSPNILKNNGPGSLVNRNSNSPYIQASKRFCFKPTTATYNILLKACGTDYYRGKELMDEMKSLGLSPNQITWSTLIDMCGGSGDVEGAVRILRTMHSAGTRPDVVAYTTAIKICAENKCLKLAFSLFEEMRRYQIKPNWVTYNTLLKARSKYGSLLEVRQCLAIYQDMRNAGYKPNDHFLKELIEEWCEGVIQENGQSQDKISDQEGDNAGRPVSLLIEKVATHMQERTAGNLAIDLQGLTKIEARLVVLAVLRMIKEDYMRGDVVIDDVLIIIGTDEANTVSGKQEITVQEALVKLLRDELSLVVLPAGQRNIIQDAHCVDDADQENTKSFVSISSTRRPAILERLMVTKASLYQWLQRRK</sequence>
<dbReference type="EMBL" id="AL162973">
    <property type="protein sequence ID" value="CAB86037.1"/>
    <property type="status" value="ALT_SEQ"/>
    <property type="molecule type" value="Genomic_DNA"/>
</dbReference>
<dbReference type="EMBL" id="CP002688">
    <property type="protein sequence ID" value="AED90523.1"/>
    <property type="molecule type" value="Genomic_DNA"/>
</dbReference>
<dbReference type="EMBL" id="AK117525">
    <property type="protein sequence ID" value="BAC42187.2"/>
    <property type="molecule type" value="mRNA"/>
</dbReference>
<dbReference type="PIR" id="T48304">
    <property type="entry name" value="T48304"/>
</dbReference>
<dbReference type="RefSeq" id="NP_195903.2">
    <property type="nucleotide sequence ID" value="NM_120361.5"/>
</dbReference>
<dbReference type="SMR" id="Q8GYL7"/>
<dbReference type="FunCoup" id="Q8GYL7">
    <property type="interactions" value="879"/>
</dbReference>
<dbReference type="STRING" id="3702.Q8GYL7"/>
<dbReference type="iPTMnet" id="Q8GYL7"/>
<dbReference type="PaxDb" id="3702-AT5G02830.1"/>
<dbReference type="ProteomicsDB" id="249252"/>
<dbReference type="EnsemblPlants" id="AT5G02830.1">
    <property type="protein sequence ID" value="AT5G02830.1"/>
    <property type="gene ID" value="AT5G02830"/>
</dbReference>
<dbReference type="GeneID" id="831772"/>
<dbReference type="Gramene" id="AT5G02830.1">
    <property type="protein sequence ID" value="AT5G02830.1"/>
    <property type="gene ID" value="AT5G02830"/>
</dbReference>
<dbReference type="KEGG" id="ath:AT5G02830"/>
<dbReference type="Araport" id="AT5G02830"/>
<dbReference type="TAIR" id="AT5G02830"/>
<dbReference type="eggNOG" id="KOG4197">
    <property type="taxonomic scope" value="Eukaryota"/>
</dbReference>
<dbReference type="HOGENOM" id="CLU_017214_0_0_1"/>
<dbReference type="InParanoid" id="Q8GYL7"/>
<dbReference type="OMA" id="NLIVEWC"/>
<dbReference type="OrthoDB" id="185373at2759"/>
<dbReference type="PRO" id="PR:Q8GYL7"/>
<dbReference type="Proteomes" id="UP000006548">
    <property type="component" value="Chromosome 5"/>
</dbReference>
<dbReference type="ExpressionAtlas" id="Q8GYL7">
    <property type="expression patterns" value="baseline and differential"/>
</dbReference>
<dbReference type="GO" id="GO:0009507">
    <property type="term" value="C:chloroplast"/>
    <property type="evidence" value="ECO:0007669"/>
    <property type="project" value="UniProtKB-SubCell"/>
</dbReference>
<dbReference type="GO" id="GO:0003729">
    <property type="term" value="F:mRNA binding"/>
    <property type="evidence" value="ECO:0000314"/>
    <property type="project" value="TAIR"/>
</dbReference>
<dbReference type="Gene3D" id="1.25.40.10">
    <property type="entry name" value="Tetratricopeptide repeat domain"/>
    <property type="match status" value="3"/>
</dbReference>
<dbReference type="InterPro" id="IPR002885">
    <property type="entry name" value="Pentatricopeptide_rpt"/>
</dbReference>
<dbReference type="InterPro" id="IPR033443">
    <property type="entry name" value="PROP1-like_PPR_dom"/>
</dbReference>
<dbReference type="InterPro" id="IPR011990">
    <property type="entry name" value="TPR-like_helical_dom_sf"/>
</dbReference>
<dbReference type="NCBIfam" id="TIGR00756">
    <property type="entry name" value="PPR"/>
    <property type="match status" value="6"/>
</dbReference>
<dbReference type="PANTHER" id="PTHR47447">
    <property type="entry name" value="OS03G0856100 PROTEIN"/>
    <property type="match status" value="1"/>
</dbReference>
<dbReference type="PANTHER" id="PTHR47447:SF17">
    <property type="entry name" value="OS12G0638900 PROTEIN"/>
    <property type="match status" value="1"/>
</dbReference>
<dbReference type="Pfam" id="PF01535">
    <property type="entry name" value="PPR"/>
    <property type="match status" value="1"/>
</dbReference>
<dbReference type="Pfam" id="PF13041">
    <property type="entry name" value="PPR_2"/>
    <property type="match status" value="1"/>
</dbReference>
<dbReference type="Pfam" id="PF17177">
    <property type="entry name" value="PPR_long"/>
    <property type="match status" value="1"/>
</dbReference>
<dbReference type="PROSITE" id="PS51375">
    <property type="entry name" value="PPR"/>
    <property type="match status" value="10"/>
</dbReference>
<reference key="1">
    <citation type="journal article" date="2000" name="Nature">
        <title>Sequence and analysis of chromosome 5 of the plant Arabidopsis thaliana.</title>
        <authorList>
            <person name="Tabata S."/>
            <person name="Kaneko T."/>
            <person name="Nakamura Y."/>
            <person name="Kotani H."/>
            <person name="Kato T."/>
            <person name="Asamizu E."/>
            <person name="Miyajima N."/>
            <person name="Sasamoto S."/>
            <person name="Kimura T."/>
            <person name="Hosouchi T."/>
            <person name="Kawashima K."/>
            <person name="Kohara M."/>
            <person name="Matsumoto M."/>
            <person name="Matsuno A."/>
            <person name="Muraki A."/>
            <person name="Nakayama S."/>
            <person name="Nakazaki N."/>
            <person name="Naruo K."/>
            <person name="Okumura S."/>
            <person name="Shinpo S."/>
            <person name="Takeuchi C."/>
            <person name="Wada T."/>
            <person name="Watanabe A."/>
            <person name="Yamada M."/>
            <person name="Yasuda M."/>
            <person name="Sato S."/>
            <person name="de la Bastide M."/>
            <person name="Huang E."/>
            <person name="Spiegel L."/>
            <person name="Gnoj L."/>
            <person name="O'Shaughnessy A."/>
            <person name="Preston R."/>
            <person name="Habermann K."/>
            <person name="Murray J."/>
            <person name="Johnson D."/>
            <person name="Rohlfing T."/>
            <person name="Nelson J."/>
            <person name="Stoneking T."/>
            <person name="Pepin K."/>
            <person name="Spieth J."/>
            <person name="Sekhon M."/>
            <person name="Armstrong J."/>
            <person name="Becker M."/>
            <person name="Belter E."/>
            <person name="Cordum H."/>
            <person name="Cordes M."/>
            <person name="Courtney L."/>
            <person name="Courtney W."/>
            <person name="Dante M."/>
            <person name="Du H."/>
            <person name="Edwards J."/>
            <person name="Fryman J."/>
            <person name="Haakensen B."/>
            <person name="Lamar E."/>
            <person name="Latreille P."/>
            <person name="Leonard S."/>
            <person name="Meyer R."/>
            <person name="Mulvaney E."/>
            <person name="Ozersky P."/>
            <person name="Riley A."/>
            <person name="Strowmatt C."/>
            <person name="Wagner-McPherson C."/>
            <person name="Wollam A."/>
            <person name="Yoakum M."/>
            <person name="Bell M."/>
            <person name="Dedhia N."/>
            <person name="Parnell L."/>
            <person name="Shah R."/>
            <person name="Rodriguez M."/>
            <person name="Hoon See L."/>
            <person name="Vil D."/>
            <person name="Baker J."/>
            <person name="Kirchoff K."/>
            <person name="Toth K."/>
            <person name="King L."/>
            <person name="Bahret A."/>
            <person name="Miller B."/>
            <person name="Marra M.A."/>
            <person name="Martienssen R."/>
            <person name="McCombie W.R."/>
            <person name="Wilson R.K."/>
            <person name="Murphy G."/>
            <person name="Bancroft I."/>
            <person name="Volckaert G."/>
            <person name="Wambutt R."/>
            <person name="Duesterhoeft A."/>
            <person name="Stiekema W."/>
            <person name="Pohl T."/>
            <person name="Entian K.-D."/>
            <person name="Terryn N."/>
            <person name="Hartley N."/>
            <person name="Bent E."/>
            <person name="Johnson S."/>
            <person name="Langham S.-A."/>
            <person name="McCullagh B."/>
            <person name="Robben J."/>
            <person name="Grymonprez B."/>
            <person name="Zimmermann W."/>
            <person name="Ramsperger U."/>
            <person name="Wedler H."/>
            <person name="Balke K."/>
            <person name="Wedler E."/>
            <person name="Peters S."/>
            <person name="van Staveren M."/>
            <person name="Dirkse W."/>
            <person name="Mooijman P."/>
            <person name="Klein Lankhorst R."/>
            <person name="Weitzenegger T."/>
            <person name="Bothe G."/>
            <person name="Rose M."/>
            <person name="Hauf J."/>
            <person name="Berneiser S."/>
            <person name="Hempel S."/>
            <person name="Feldpausch M."/>
            <person name="Lamberth S."/>
            <person name="Villarroel R."/>
            <person name="Gielen J."/>
            <person name="Ardiles W."/>
            <person name="Bents O."/>
            <person name="Lemcke K."/>
            <person name="Kolesov G."/>
            <person name="Mayer K.F.X."/>
            <person name="Rudd S."/>
            <person name="Schoof H."/>
            <person name="Schueller C."/>
            <person name="Zaccaria P."/>
            <person name="Mewes H.-W."/>
            <person name="Bevan M."/>
            <person name="Fransz P.F."/>
        </authorList>
    </citation>
    <scope>NUCLEOTIDE SEQUENCE [LARGE SCALE GENOMIC DNA]</scope>
    <source>
        <strain>cv. Columbia</strain>
    </source>
</reference>
<reference key="2">
    <citation type="journal article" date="2017" name="Plant J.">
        <title>Araport11: a complete reannotation of the Arabidopsis thaliana reference genome.</title>
        <authorList>
            <person name="Cheng C.Y."/>
            <person name="Krishnakumar V."/>
            <person name="Chan A.P."/>
            <person name="Thibaud-Nissen F."/>
            <person name="Schobel S."/>
            <person name="Town C.D."/>
        </authorList>
    </citation>
    <scope>GENOME REANNOTATION</scope>
    <source>
        <strain>cv. Columbia</strain>
    </source>
</reference>
<reference key="3">
    <citation type="journal article" date="2002" name="Science">
        <title>Functional annotation of a full-length Arabidopsis cDNA collection.</title>
        <authorList>
            <person name="Seki M."/>
            <person name="Narusaka M."/>
            <person name="Kamiya A."/>
            <person name="Ishida J."/>
            <person name="Satou M."/>
            <person name="Sakurai T."/>
            <person name="Nakajima M."/>
            <person name="Enju A."/>
            <person name="Akiyama K."/>
            <person name="Oono Y."/>
            <person name="Muramatsu M."/>
            <person name="Hayashizaki Y."/>
            <person name="Kawai J."/>
            <person name="Carninci P."/>
            <person name="Itoh M."/>
            <person name="Ishii Y."/>
            <person name="Arakawa T."/>
            <person name="Shibata K."/>
            <person name="Shinagawa A."/>
            <person name="Shinozaki K."/>
        </authorList>
    </citation>
    <scope>NUCLEOTIDE SEQUENCE [LARGE SCALE MRNA]</scope>
    <source>
        <strain>cv. Columbia</strain>
    </source>
</reference>
<reference key="4">
    <citation type="journal article" date="2004" name="Plant Cell">
        <title>Genome-wide analysis of Arabidopsis pentatricopeptide repeat proteins reveals their essential role in organelle biogenesis.</title>
        <authorList>
            <person name="Lurin C."/>
            <person name="Andres C."/>
            <person name="Aubourg S."/>
            <person name="Bellaoui M."/>
            <person name="Bitton F."/>
            <person name="Bruyere C."/>
            <person name="Caboche M."/>
            <person name="Debast C."/>
            <person name="Gualberto J."/>
            <person name="Hoffmann B."/>
            <person name="Lecharny A."/>
            <person name="Le Ret M."/>
            <person name="Martin-Magniette M.-L."/>
            <person name="Mireau H."/>
            <person name="Peeters N."/>
            <person name="Renou J.-P."/>
            <person name="Szurek B."/>
            <person name="Taconnat L."/>
            <person name="Small I."/>
        </authorList>
    </citation>
    <scope>GENE FAMILY</scope>
</reference>
<protein>
    <recommendedName>
        <fullName>Pentatricopeptide repeat-containing protein At5g02830, chloroplastic</fullName>
    </recommendedName>
</protein>
<proteinExistence type="evidence at transcript level"/>
<gene>
    <name type="ordered locus">At5g02830</name>
    <name type="ORF">F9G14_140</name>
</gene>
<accession>Q8GYL7</accession>
<accession>Q9LZ02</accession>
<name>PP361_ARATH</name>
<organism>
    <name type="scientific">Arabidopsis thaliana</name>
    <name type="common">Mouse-ear cress</name>
    <dbReference type="NCBI Taxonomy" id="3702"/>
    <lineage>
        <taxon>Eukaryota</taxon>
        <taxon>Viridiplantae</taxon>
        <taxon>Streptophyta</taxon>
        <taxon>Embryophyta</taxon>
        <taxon>Tracheophyta</taxon>
        <taxon>Spermatophyta</taxon>
        <taxon>Magnoliopsida</taxon>
        <taxon>eudicotyledons</taxon>
        <taxon>Gunneridae</taxon>
        <taxon>Pentapetalae</taxon>
        <taxon>rosids</taxon>
        <taxon>malvids</taxon>
        <taxon>Brassicales</taxon>
        <taxon>Brassicaceae</taxon>
        <taxon>Camelineae</taxon>
        <taxon>Arabidopsis</taxon>
    </lineage>
</organism>
<keyword id="KW-0150">Chloroplast</keyword>
<keyword id="KW-0934">Plastid</keyword>
<keyword id="KW-1185">Reference proteome</keyword>
<keyword id="KW-0677">Repeat</keyword>
<keyword id="KW-0809">Transit peptide</keyword>
<evidence type="ECO:0000255" key="1"/>
<evidence type="ECO:0000256" key="2">
    <source>
        <dbReference type="SAM" id="MobiDB-lite"/>
    </source>
</evidence>
<evidence type="ECO:0000305" key="3"/>
<comment type="subcellular location">
    <subcellularLocation>
        <location evidence="3">Plastid</location>
        <location evidence="3">Chloroplast</location>
    </subcellularLocation>
</comment>
<comment type="similarity">
    <text evidence="3">Belongs to the PPR family. P subfamily.</text>
</comment>
<comment type="sequence caution" evidence="3">
    <conflict type="erroneous gene model prediction">
        <sequence resource="EMBL-CDS" id="CAB86037"/>
    </conflict>
</comment>
<comment type="online information" name="Pentatricopeptide repeat proteins">
    <link uri="https://ppr.plantenergy.uwa.edu.au"/>
</comment>
<feature type="transit peptide" description="Chloroplast" evidence="1">
    <location>
        <begin position="1"/>
        <end position="25"/>
    </location>
</feature>
<feature type="chain" id="PRO_0000363498" description="Pentatricopeptide repeat-containing protein At5g02830, chloroplastic">
    <location>
        <begin position="26"/>
        <end position="852"/>
    </location>
</feature>
<feature type="repeat" description="PPR 1">
    <location>
        <begin position="334"/>
        <end position="364"/>
    </location>
</feature>
<feature type="repeat" description="PPR 2">
    <location>
        <begin position="373"/>
        <end position="407"/>
    </location>
</feature>
<feature type="repeat" description="PPR 3">
    <location>
        <begin position="408"/>
        <end position="442"/>
    </location>
</feature>
<feature type="repeat" description="PPR 4">
    <location>
        <begin position="443"/>
        <end position="477"/>
    </location>
</feature>
<feature type="repeat" description="PPR 5">
    <location>
        <begin position="525"/>
        <end position="557"/>
    </location>
</feature>
<feature type="repeat" description="PPR 6">
    <location>
        <begin position="558"/>
        <end position="592"/>
    </location>
</feature>
<feature type="repeat" description="PPR 7">
    <location>
        <begin position="593"/>
        <end position="627"/>
    </location>
</feature>
<feature type="repeat" description="PPR 8">
    <location>
        <begin position="628"/>
        <end position="665"/>
    </location>
</feature>
<feature type="region of interest" description="Disordered" evidence="2">
    <location>
        <begin position="17"/>
        <end position="60"/>
    </location>
</feature>
<feature type="compositionally biased region" description="Low complexity" evidence="2">
    <location>
        <begin position="44"/>
        <end position="58"/>
    </location>
</feature>
<feature type="sequence conflict" description="In Ref. 3; BAC42187." evidence="3" ref="3">
    <original>Q</original>
    <variation>R</variation>
    <location>
        <position position="687"/>
    </location>
</feature>